<name>MFRN1_HUMAN</name>
<evidence type="ECO:0000250" key="1">
    <source>
        <dbReference type="UniProtKB" id="Q287T7"/>
    </source>
</evidence>
<evidence type="ECO:0000250" key="2">
    <source>
        <dbReference type="UniProtKB" id="Q920G8"/>
    </source>
</evidence>
<evidence type="ECO:0000255" key="3"/>
<evidence type="ECO:0000256" key="4">
    <source>
        <dbReference type="SAM" id="MobiDB-lite"/>
    </source>
</evidence>
<evidence type="ECO:0000269" key="5">
    <source>
    </source>
</evidence>
<evidence type="ECO:0000269" key="6">
    <source ref="4"/>
</evidence>
<evidence type="ECO:0000303" key="7">
    <source>
    </source>
</evidence>
<evidence type="ECO:0000303" key="8">
    <source>
    </source>
</evidence>
<evidence type="ECO:0000303" key="9">
    <source>
    </source>
</evidence>
<evidence type="ECO:0000303" key="10">
    <source ref="1"/>
</evidence>
<evidence type="ECO:0000303" key="11">
    <source ref="4"/>
</evidence>
<evidence type="ECO:0000305" key="12"/>
<sequence>MELRSGSVGSQAVARRMDGDSRDGGGGKDATGSEDYENLPTSASVSTHMTAGAMAGILEHSVMYPVDSVKTRMQSLSPDPKAQYTSIYGALKKIMRTEGFWRPLRGVNVMIMGAGPAHAMYFACYENMKRTLNDVFHHQGNSHLANGIAGSMATLLHDAVMNPAEVVKQRLQMYNSQHRSAISCIRTVWRTEGLGAFYRSYTTQLTMNIPFQSIHFITYEFLQEQVNPHRTYNPQSHIISGGLAGALAAAATTPLDVCKTLLNTQENVALSLANISGRLSGMANAFRTVYQLNGLAGYFKGIQARVIYQMPSTAISWSVYEFFKYFLTKRQLENRAPY</sequence>
<gene>
    <name type="primary">SLC25A37</name>
    <name type="synonym">MFRN</name>
    <name type="synonym">MSCP</name>
    <name type="ORF">HT015</name>
</gene>
<accession>Q9NYZ2</accession>
<accession>A2RU93</accession>
<accession>Q53FT7</accession>
<accession>Q69YJ8</accession>
<accession>Q969S1</accession>
<accession>Q9P0J2</accession>
<dbReference type="EMBL" id="AY032628">
    <property type="protein sequence ID" value="AAK38154.1"/>
    <property type="molecule type" value="mRNA"/>
</dbReference>
<dbReference type="EMBL" id="AF155660">
    <property type="protein sequence ID" value="AAF67479.1"/>
    <property type="molecule type" value="mRNA"/>
</dbReference>
<dbReference type="EMBL" id="AF223466">
    <property type="protein sequence ID" value="AAF64141.1"/>
    <property type="status" value="ALT_FRAME"/>
    <property type="molecule type" value="mRNA"/>
</dbReference>
<dbReference type="EMBL" id="AK223194">
    <property type="protein sequence ID" value="BAD96914.1"/>
    <property type="molecule type" value="mRNA"/>
</dbReference>
<dbReference type="EMBL" id="CH471080">
    <property type="protein sequence ID" value="EAW63617.1"/>
    <property type="molecule type" value="Genomic_DNA"/>
</dbReference>
<dbReference type="EMBL" id="BC132799">
    <property type="protein sequence ID" value="AAI32800.1"/>
    <property type="molecule type" value="mRNA"/>
</dbReference>
<dbReference type="EMBL" id="BC132801">
    <property type="protein sequence ID" value="AAI32802.1"/>
    <property type="molecule type" value="mRNA"/>
</dbReference>
<dbReference type="EMBL" id="BC015013">
    <property type="protein sequence ID" value="AAH15013.1"/>
    <property type="molecule type" value="mRNA"/>
</dbReference>
<dbReference type="EMBL" id="AL833186">
    <property type="protein sequence ID" value="CAH10415.1"/>
    <property type="status" value="ALT_SEQ"/>
    <property type="molecule type" value="mRNA"/>
</dbReference>
<dbReference type="CCDS" id="CCDS47828.1">
    <molecule id="Q9NYZ2-1"/>
</dbReference>
<dbReference type="RefSeq" id="NP_001304741.1">
    <molecule id="Q9NYZ2-4"/>
    <property type="nucleotide sequence ID" value="NM_001317812.2"/>
</dbReference>
<dbReference type="RefSeq" id="NP_001304742.1">
    <property type="nucleotide sequence ID" value="NM_001317813.1"/>
</dbReference>
<dbReference type="RefSeq" id="NP_001304743.1">
    <property type="nucleotide sequence ID" value="NM_001317814.1"/>
</dbReference>
<dbReference type="RefSeq" id="NP_057696.2">
    <molecule id="Q9NYZ2-1"/>
    <property type="nucleotide sequence ID" value="NM_016612.4"/>
</dbReference>
<dbReference type="RefSeq" id="XP_011542856.1">
    <property type="nucleotide sequence ID" value="XM_011544554.2"/>
</dbReference>
<dbReference type="SMR" id="Q9NYZ2"/>
<dbReference type="BioGRID" id="119463">
    <property type="interactions" value="8"/>
</dbReference>
<dbReference type="FunCoup" id="Q9NYZ2">
    <property type="interactions" value="1959"/>
</dbReference>
<dbReference type="IntAct" id="Q9NYZ2">
    <property type="interactions" value="1"/>
</dbReference>
<dbReference type="STRING" id="9606.ENSP00000429200"/>
<dbReference type="TCDB" id="2.A.29.5.7">
    <property type="family name" value="the mitochondrial carrier (mc) family"/>
</dbReference>
<dbReference type="iPTMnet" id="Q9NYZ2"/>
<dbReference type="PhosphoSitePlus" id="Q9NYZ2"/>
<dbReference type="BioMuta" id="SLC25A37"/>
<dbReference type="DMDM" id="189047115"/>
<dbReference type="jPOST" id="Q9NYZ2"/>
<dbReference type="MassIVE" id="Q9NYZ2"/>
<dbReference type="PaxDb" id="9606-ENSP00000429200"/>
<dbReference type="PeptideAtlas" id="Q9NYZ2"/>
<dbReference type="ProteomicsDB" id="83303">
    <molecule id="Q9NYZ2-1"/>
</dbReference>
<dbReference type="ProteomicsDB" id="83304">
    <molecule id="Q9NYZ2-2"/>
</dbReference>
<dbReference type="ProteomicsDB" id="83305">
    <molecule id="Q9NYZ2-4"/>
</dbReference>
<dbReference type="Pumba" id="Q9NYZ2"/>
<dbReference type="Antibodypedia" id="42015">
    <property type="antibodies" value="158 antibodies from 20 providers"/>
</dbReference>
<dbReference type="DNASU" id="51312"/>
<dbReference type="Ensembl" id="ENST00000290075.10">
    <molecule id="Q9NYZ2-2"/>
    <property type="protein sequence ID" value="ENSP00000290075.6"/>
    <property type="gene ID" value="ENSG00000147454.14"/>
</dbReference>
<dbReference type="Ensembl" id="ENST00000519973.6">
    <molecule id="Q9NYZ2-1"/>
    <property type="protein sequence ID" value="ENSP00000429200.1"/>
    <property type="gene ID" value="ENSG00000147454.14"/>
</dbReference>
<dbReference type="GeneID" id="51312"/>
<dbReference type="KEGG" id="hsa:51312"/>
<dbReference type="MANE-Select" id="ENST00000519973.6">
    <property type="protein sequence ID" value="ENSP00000429200.1"/>
    <property type="RefSeq nucleotide sequence ID" value="NM_016612.4"/>
    <property type="RefSeq protein sequence ID" value="NP_057696.2"/>
</dbReference>
<dbReference type="UCSC" id="uc003xds.4">
    <molecule id="Q9NYZ2-1"/>
    <property type="organism name" value="human"/>
</dbReference>
<dbReference type="AGR" id="HGNC:29786"/>
<dbReference type="CTD" id="51312"/>
<dbReference type="DisGeNET" id="51312"/>
<dbReference type="GeneCards" id="SLC25A37"/>
<dbReference type="HGNC" id="HGNC:29786">
    <property type="gene designation" value="SLC25A37"/>
</dbReference>
<dbReference type="HPA" id="ENSG00000147454">
    <property type="expression patterns" value="Tissue enhanced (bone)"/>
</dbReference>
<dbReference type="MIM" id="610387">
    <property type="type" value="gene"/>
</dbReference>
<dbReference type="neXtProt" id="NX_Q9NYZ2"/>
<dbReference type="OpenTargets" id="ENSG00000147454"/>
<dbReference type="PharmGKB" id="PA142670909"/>
<dbReference type="VEuPathDB" id="HostDB:ENSG00000147454"/>
<dbReference type="eggNOG" id="KOG0760">
    <property type="taxonomic scope" value="Eukaryota"/>
</dbReference>
<dbReference type="GeneTree" id="ENSGT00940000158607"/>
<dbReference type="HOGENOM" id="CLU_015166_3_1_1"/>
<dbReference type="InParanoid" id="Q9NYZ2"/>
<dbReference type="OMA" id="MYNSQHQ"/>
<dbReference type="OrthoDB" id="43906at2759"/>
<dbReference type="PAN-GO" id="Q9NYZ2">
    <property type="GO annotations" value="3 GO annotations based on evolutionary models"/>
</dbReference>
<dbReference type="PhylomeDB" id="Q9NYZ2"/>
<dbReference type="TreeFam" id="TF314118"/>
<dbReference type="PathwayCommons" id="Q9NYZ2"/>
<dbReference type="Reactome" id="R-HSA-1362409">
    <property type="pathway name" value="Mitochondrial iron-sulfur cluster biogenesis"/>
</dbReference>
<dbReference type="SignaLink" id="Q9NYZ2"/>
<dbReference type="BioGRID-ORCS" id="51312">
    <property type="hits" value="30 hits in 1172 CRISPR screens"/>
</dbReference>
<dbReference type="ChiTaRS" id="SLC25A37">
    <property type="organism name" value="human"/>
</dbReference>
<dbReference type="GeneWiki" id="SLC25A37"/>
<dbReference type="GenomeRNAi" id="51312"/>
<dbReference type="Pharos" id="Q9NYZ2">
    <property type="development level" value="Tbio"/>
</dbReference>
<dbReference type="PRO" id="PR:Q9NYZ2"/>
<dbReference type="Proteomes" id="UP000005640">
    <property type="component" value="Chromosome 8"/>
</dbReference>
<dbReference type="RNAct" id="Q9NYZ2">
    <property type="molecule type" value="protein"/>
</dbReference>
<dbReference type="Bgee" id="ENSG00000147454">
    <property type="expression patterns" value="Expressed in trabecular bone tissue and 191 other cell types or tissues"/>
</dbReference>
<dbReference type="ExpressionAtlas" id="Q9NYZ2">
    <property type="expression patterns" value="baseline and differential"/>
</dbReference>
<dbReference type="GO" id="GO:0005743">
    <property type="term" value="C:mitochondrial inner membrane"/>
    <property type="evidence" value="ECO:0007669"/>
    <property type="project" value="UniProtKB-SubCell"/>
</dbReference>
<dbReference type="GO" id="GO:0031966">
    <property type="term" value="C:mitochondrial membrane"/>
    <property type="evidence" value="ECO:0000318"/>
    <property type="project" value="GO_Central"/>
</dbReference>
<dbReference type="GO" id="GO:0005739">
    <property type="term" value="C:mitochondrion"/>
    <property type="evidence" value="ECO:0006056"/>
    <property type="project" value="FlyBase"/>
</dbReference>
<dbReference type="GO" id="GO:0015093">
    <property type="term" value="F:ferrous iron transmembrane transporter activity"/>
    <property type="evidence" value="ECO:0000318"/>
    <property type="project" value="GO_Central"/>
</dbReference>
<dbReference type="GO" id="GO:0005381">
    <property type="term" value="F:iron ion transmembrane transporter activity"/>
    <property type="evidence" value="ECO:0000314"/>
    <property type="project" value="UniProtKB"/>
</dbReference>
<dbReference type="GO" id="GO:0048250">
    <property type="term" value="P:iron import into the mitochondrion"/>
    <property type="evidence" value="ECO:0000315"/>
    <property type="project" value="UniProtKB"/>
</dbReference>
<dbReference type="GO" id="GO:0046985">
    <property type="term" value="P:positive regulation of hemoglobin biosynthetic process"/>
    <property type="evidence" value="ECO:0000250"/>
    <property type="project" value="UniProtKB"/>
</dbReference>
<dbReference type="FunFam" id="1.50.40.10:FF:000027">
    <property type="entry name" value="mitoferrin-2 isoform X1"/>
    <property type="match status" value="1"/>
</dbReference>
<dbReference type="FunFam" id="1.50.40.10:FF:000031">
    <property type="entry name" value="mitoferrin-2 isoform X1"/>
    <property type="match status" value="1"/>
</dbReference>
<dbReference type="Gene3D" id="1.50.40.10">
    <property type="entry name" value="Mitochondrial carrier domain"/>
    <property type="match status" value="2"/>
</dbReference>
<dbReference type="InterPro" id="IPR018108">
    <property type="entry name" value="Mitochondrial_sb/sol_carrier"/>
</dbReference>
<dbReference type="InterPro" id="IPR023395">
    <property type="entry name" value="Mt_carrier_dom_sf"/>
</dbReference>
<dbReference type="PANTHER" id="PTHR45758:SF4">
    <property type="entry name" value="MITOFERRIN-1"/>
    <property type="match status" value="1"/>
</dbReference>
<dbReference type="PANTHER" id="PTHR45758">
    <property type="entry name" value="MITOFERRIN-1-RELATED"/>
    <property type="match status" value="1"/>
</dbReference>
<dbReference type="Pfam" id="PF00153">
    <property type="entry name" value="Mito_carr"/>
    <property type="match status" value="3"/>
</dbReference>
<dbReference type="SUPFAM" id="SSF103506">
    <property type="entry name" value="Mitochondrial carrier"/>
    <property type="match status" value="1"/>
</dbReference>
<dbReference type="PROSITE" id="PS50920">
    <property type="entry name" value="SOLCAR"/>
    <property type="match status" value="3"/>
</dbReference>
<feature type="chain" id="PRO_0000235251" description="Mitoferrin-1">
    <location>
        <begin position="1"/>
        <end position="338"/>
    </location>
</feature>
<feature type="transmembrane region" description="Helical; Name=1" evidence="3">
    <location>
        <begin position="45"/>
        <end position="64"/>
    </location>
</feature>
<feature type="transmembrane region" description="Helical; Name=2" evidence="3">
    <location>
        <begin position="106"/>
        <end position="125"/>
    </location>
</feature>
<feature type="transmembrane region" description="Helical; Name=3" evidence="3">
    <location>
        <begin position="143"/>
        <end position="162"/>
    </location>
</feature>
<feature type="transmembrane region" description="Helical; Name=4" evidence="3">
    <location>
        <begin position="200"/>
        <end position="219"/>
    </location>
</feature>
<feature type="transmembrane region" description="Helical; Name=5" evidence="3">
    <location>
        <begin position="234"/>
        <end position="253"/>
    </location>
</feature>
<feature type="transmembrane region" description="Helical; Name=6" evidence="3">
    <location>
        <begin position="301"/>
        <end position="320"/>
    </location>
</feature>
<feature type="repeat" description="Solcar 1">
    <location>
        <begin position="43"/>
        <end position="131"/>
    </location>
</feature>
<feature type="repeat" description="Solcar 2">
    <location>
        <begin position="141"/>
        <end position="225"/>
    </location>
</feature>
<feature type="repeat" description="Solcar 3">
    <location>
        <begin position="232"/>
        <end position="326"/>
    </location>
</feature>
<feature type="region of interest" description="Disordered" evidence="4">
    <location>
        <begin position="1"/>
        <end position="42"/>
    </location>
</feature>
<feature type="compositionally biased region" description="Basic and acidic residues" evidence="4">
    <location>
        <begin position="15"/>
        <end position="26"/>
    </location>
</feature>
<feature type="splice variant" id="VSP_018400" description="In isoform 4." evidence="7">
    <location>
        <begin position="1"/>
        <end position="151"/>
    </location>
</feature>
<feature type="splice variant" id="VSP_018402" description="In isoform 2." evidence="8 9 10 11">
    <original>AGSMATL</original>
    <variation>LKAFVWS</variation>
    <location>
        <begin position="149"/>
        <end position="155"/>
    </location>
</feature>
<feature type="splice variant" id="VSP_018403" description="In isoform 2." evidence="8 9 10 11">
    <location>
        <begin position="156"/>
        <end position="338"/>
    </location>
</feature>
<feature type="sequence variant" id="VAR_043144" description="In dbSNP:rs2942194.">
    <original>I</original>
    <variation>V</variation>
    <location>
        <position position="87"/>
    </location>
</feature>
<feature type="sequence variant" id="VAR_043145" description="In dbSNP:rs3736032." evidence="6">
    <original>R</original>
    <variation>Q</variation>
    <location>
        <position position="96"/>
    </location>
</feature>
<proteinExistence type="evidence at protein level"/>
<organism>
    <name type="scientific">Homo sapiens</name>
    <name type="common">Human</name>
    <dbReference type="NCBI Taxonomy" id="9606"/>
    <lineage>
        <taxon>Eukaryota</taxon>
        <taxon>Metazoa</taxon>
        <taxon>Chordata</taxon>
        <taxon>Craniata</taxon>
        <taxon>Vertebrata</taxon>
        <taxon>Euteleostomi</taxon>
        <taxon>Mammalia</taxon>
        <taxon>Eutheria</taxon>
        <taxon>Euarchontoglires</taxon>
        <taxon>Primates</taxon>
        <taxon>Haplorrhini</taxon>
        <taxon>Catarrhini</taxon>
        <taxon>Hominidae</taxon>
        <taxon>Homo</taxon>
    </lineage>
</organism>
<reference key="1">
    <citation type="submission" date="2001-04" db="EMBL/GenBank/DDBJ databases">
        <title>Molecular cloning of a novel mictochondria solute carrier protein (MSCP) gene from mouse and human and its down-regulation in mouse spleen during the maturation of the immune system.</title>
        <authorList>
            <person name="Li Q."/>
            <person name="Eckenrode S."/>
            <person name="Ruan Q."/>
            <person name="Wang C."/>
            <person name="Shi J."/>
            <person name="McIndoe R.A."/>
            <person name="She J."/>
        </authorList>
    </citation>
    <scope>NUCLEOTIDE SEQUENCE [MRNA] (ISOFORM 2)</scope>
</reference>
<reference key="2">
    <citation type="journal article" date="2000" name="Proc. Natl. Acad. Sci. U.S.A.">
        <title>Gene expression profiling in the human hypothalamus-pituitary-adrenal axis and full-length cDNA cloning.</title>
        <authorList>
            <person name="Hu R.-M."/>
            <person name="Han Z.-G."/>
            <person name="Song H.-D."/>
            <person name="Peng Y.-D."/>
            <person name="Huang Q.-H."/>
            <person name="Ren S.-X."/>
            <person name="Gu Y.-J."/>
            <person name="Huang C.-H."/>
            <person name="Li Y.-B."/>
            <person name="Jiang C.-L."/>
            <person name="Fu G."/>
            <person name="Zhang Q.-H."/>
            <person name="Gu B.-W."/>
            <person name="Dai M."/>
            <person name="Mao Y.-F."/>
            <person name="Gao G.-F."/>
            <person name="Rong R."/>
            <person name="Ye M."/>
            <person name="Zhou J."/>
            <person name="Xu S.-H."/>
            <person name="Gu J."/>
            <person name="Shi J.-X."/>
            <person name="Jin W.-R."/>
            <person name="Zhang C.-K."/>
            <person name="Wu T.-M."/>
            <person name="Huang G.-Y."/>
            <person name="Chen Z."/>
            <person name="Chen M.-D."/>
            <person name="Chen J.-L."/>
        </authorList>
    </citation>
    <scope>NUCLEOTIDE SEQUENCE [LARGE SCALE MRNA] (ISOFORM 4)</scope>
    <source>
        <tissue>Adrenal gland</tissue>
    </source>
</reference>
<reference key="3">
    <citation type="submission" date="2000-01" db="EMBL/GenBank/DDBJ databases">
        <title>A novel gene expressed in human hypothalamus.</title>
        <authorList>
            <person name="Song H."/>
            <person name="Gao G."/>
            <person name="Peng Y."/>
            <person name="Ren S."/>
            <person name="Chen Z."/>
            <person name="Han Z."/>
        </authorList>
    </citation>
    <scope>NUCLEOTIDE SEQUENCE [LARGE SCALE MRNA] (ISOFORM 1)</scope>
    <source>
        <tissue>Hypothalamus</tissue>
    </source>
</reference>
<reference key="4">
    <citation type="submission" date="2005-04" db="EMBL/GenBank/DDBJ databases">
        <authorList>
            <person name="Suzuki Y."/>
            <person name="Sugano S."/>
            <person name="Totoki Y."/>
            <person name="Toyoda A."/>
            <person name="Takeda T."/>
            <person name="Sakaki Y."/>
            <person name="Tanaka A."/>
            <person name="Yokoyama S."/>
        </authorList>
    </citation>
    <scope>NUCLEOTIDE SEQUENCE [LARGE SCALE MRNA] (ISOFORM 2)</scope>
    <scope>VARIANT GLN-96</scope>
    <source>
        <tissue>Pancreas</tissue>
    </source>
</reference>
<reference key="5">
    <citation type="submission" date="2005-09" db="EMBL/GenBank/DDBJ databases">
        <authorList>
            <person name="Mural R.J."/>
            <person name="Istrail S."/>
            <person name="Sutton G.G."/>
            <person name="Florea L."/>
            <person name="Halpern A.L."/>
            <person name="Mobarry C.M."/>
            <person name="Lippert R."/>
            <person name="Walenz B."/>
            <person name="Shatkay H."/>
            <person name="Dew I."/>
            <person name="Miller J.R."/>
            <person name="Flanigan M.J."/>
            <person name="Edwards N.J."/>
            <person name="Bolanos R."/>
            <person name="Fasulo D."/>
            <person name="Halldorsson B.V."/>
            <person name="Hannenhalli S."/>
            <person name="Turner R."/>
            <person name="Yooseph S."/>
            <person name="Lu F."/>
            <person name="Nusskern D.R."/>
            <person name="Shue B.C."/>
            <person name="Zheng X.H."/>
            <person name="Zhong F."/>
            <person name="Delcher A.L."/>
            <person name="Huson D.H."/>
            <person name="Kravitz S.A."/>
            <person name="Mouchard L."/>
            <person name="Reinert K."/>
            <person name="Remington K.A."/>
            <person name="Clark A.G."/>
            <person name="Waterman M.S."/>
            <person name="Eichler E.E."/>
            <person name="Adams M.D."/>
            <person name="Hunkapiller M.W."/>
            <person name="Myers E.W."/>
            <person name="Venter J.C."/>
        </authorList>
    </citation>
    <scope>NUCLEOTIDE SEQUENCE [LARGE SCALE GENOMIC DNA]</scope>
</reference>
<reference key="6">
    <citation type="journal article" date="2004" name="Genome Res.">
        <title>The status, quality, and expansion of the NIH full-length cDNA project: the Mammalian Gene Collection (MGC).</title>
        <authorList>
            <consortium name="The MGC Project Team"/>
        </authorList>
    </citation>
    <scope>NUCLEOTIDE SEQUENCE [LARGE SCALE MRNA] (ISOFORMS 1 AND 2)</scope>
    <source>
        <tissue>Brain</tissue>
        <tissue>Uterus</tissue>
    </source>
</reference>
<reference key="7">
    <citation type="journal article" date="2007" name="BMC Genomics">
        <title>The full-ORF clone resource of the German cDNA consortium.</title>
        <authorList>
            <person name="Bechtel S."/>
            <person name="Rosenfelder H."/>
            <person name="Duda A."/>
            <person name="Schmidt C.P."/>
            <person name="Ernst U."/>
            <person name="Wellenreuther R."/>
            <person name="Mehrle A."/>
            <person name="Schuster C."/>
            <person name="Bahr A."/>
            <person name="Bloecker H."/>
            <person name="Heubner D."/>
            <person name="Hoerlein A."/>
            <person name="Michel G."/>
            <person name="Wedler H."/>
            <person name="Koehrer K."/>
            <person name="Ottenwaelder B."/>
            <person name="Poustka A."/>
            <person name="Wiemann S."/>
            <person name="Schupp I."/>
        </authorList>
    </citation>
    <scope>NUCLEOTIDE SEQUENCE [LARGE SCALE MRNA] OF 18-338 (ISOFORM 2)</scope>
    <source>
        <tissue>Lymph node</tissue>
    </source>
</reference>
<reference key="8">
    <citation type="journal article" date="2022" name="Nat. Commun.">
        <title>Combinatorial GxGxE CRISPR screen identifies SLC25A39 in mitochondrial glutathione transport linking iron homeostasis to OXPHOS.</title>
        <authorList>
            <person name="Shi X."/>
            <person name="Reinstadler B."/>
            <person name="Shah H."/>
            <person name="To T.L."/>
            <person name="Byrne K."/>
            <person name="Summer L."/>
            <person name="Calvo S.E."/>
            <person name="Goldberger O."/>
            <person name="Doench J.G."/>
            <person name="Mootha V.K."/>
            <person name="Shen H."/>
        </authorList>
    </citation>
    <scope>FUNCTION</scope>
    <scope>TRANSPORTER ACTIVITY</scope>
    <scope>MUTAGENESIS OF ASP-226</scope>
</reference>
<comment type="function">
    <text evidence="5">Mitochondrial iron transporter that specifically mediates iron uptake in developing erythroid cells, thereby playing an essential role in heme biosynthesis.</text>
</comment>
<comment type="catalytic activity">
    <reaction evidence="5">
        <text>Fe(2+)(in) = Fe(2+)(out)</text>
        <dbReference type="Rhea" id="RHEA:28486"/>
        <dbReference type="ChEBI" id="CHEBI:29033"/>
    </reaction>
</comment>
<comment type="subunit">
    <text evidence="2">Interacts with ACB10; this interaction stabilizes SLC25A37 and enhances the function of SLC25A37 to import mitochondrial iron during erythroid differentiation.</text>
</comment>
<comment type="interaction">
    <interactant intactId="EBI-13074156">
        <id>Q9NYZ2</id>
    </interactant>
    <interactant intactId="EBI-11278955">
        <id>Q9UL41</id>
        <label>PNMA3</label>
    </interactant>
    <organismsDiffer>false</organismsDiffer>
    <experiments>3</experiments>
</comment>
<comment type="subcellular location">
    <subcellularLocation>
        <location evidence="1">Mitochondrion inner membrane</location>
        <topology evidence="3">Multi-pass membrane protein</topology>
    </subcellularLocation>
</comment>
<comment type="alternative products">
    <event type="alternative splicing"/>
    <isoform>
        <id>Q9NYZ2-1</id>
        <name>1</name>
        <sequence type="displayed"/>
    </isoform>
    <isoform>
        <id>Q9NYZ2-2</id>
        <name>2</name>
        <sequence type="described" ref="VSP_018402 VSP_018403"/>
    </isoform>
    <isoform>
        <id>Q9NYZ2-4</id>
        <name>4</name>
        <sequence type="described" ref="VSP_018400"/>
    </isoform>
</comment>
<comment type="similarity">
    <text evidence="12">Belongs to the mitochondrial carrier (TC 2.A.29) family.</text>
</comment>
<comment type="sequence caution" evidence="12">
    <conflict type="frameshift">
        <sequence resource="EMBL-CDS" id="AAF64141"/>
    </conflict>
</comment>
<comment type="sequence caution" evidence="12">
    <conflict type="erroneous translation">
        <sequence resource="EMBL-CDS" id="CAH10415"/>
    </conflict>
    <text>Wrong choice of CDS.</text>
</comment>
<keyword id="KW-0025">Alternative splicing</keyword>
<keyword id="KW-0406">Ion transport</keyword>
<keyword id="KW-0408">Iron</keyword>
<keyword id="KW-0410">Iron transport</keyword>
<keyword id="KW-0472">Membrane</keyword>
<keyword id="KW-0496">Mitochondrion</keyword>
<keyword id="KW-0999">Mitochondrion inner membrane</keyword>
<keyword id="KW-1267">Proteomics identification</keyword>
<keyword id="KW-1185">Reference proteome</keyword>
<keyword id="KW-0677">Repeat</keyword>
<keyword id="KW-0812">Transmembrane</keyword>
<keyword id="KW-1133">Transmembrane helix</keyword>
<keyword id="KW-0813">Transport</keyword>
<protein>
    <recommendedName>
        <fullName>Mitoferrin-1</fullName>
    </recommendedName>
    <alternativeName>
        <fullName>Mitochondrial iron transporter 1</fullName>
    </alternativeName>
    <alternativeName>
        <fullName>Mitochondrial solute carrier protein</fullName>
    </alternativeName>
    <alternativeName>
        <fullName>Solute carrier family 25 member 37</fullName>
    </alternativeName>
</protein>